<gene>
    <name evidence="1" type="primary">atpF</name>
    <name type="ordered locus">SeHA_C4200</name>
</gene>
<feature type="chain" id="PRO_0000368744" description="ATP synthase subunit b">
    <location>
        <begin position="1"/>
        <end position="156"/>
    </location>
</feature>
<feature type="transmembrane region" description="Helical" evidence="1">
    <location>
        <begin position="11"/>
        <end position="31"/>
    </location>
</feature>
<comment type="function">
    <text evidence="1">F(1)F(0) ATP synthase produces ATP from ADP in the presence of a proton or sodium gradient. F-type ATPases consist of two structural domains, F(1) containing the extramembraneous catalytic core and F(0) containing the membrane proton channel, linked together by a central stalk and a peripheral stalk. During catalysis, ATP synthesis in the catalytic domain of F(1) is coupled via a rotary mechanism of the central stalk subunits to proton translocation.</text>
</comment>
<comment type="function">
    <text evidence="1">Component of the F(0) channel, it forms part of the peripheral stalk, linking F(1) to F(0).</text>
</comment>
<comment type="subunit">
    <text evidence="1">F-type ATPases have 2 components, F(1) - the catalytic core - and F(0) - the membrane proton channel. F(1) has five subunits: alpha(3), beta(3), gamma(1), delta(1), epsilon(1). F(0) has three main subunits: a(1), b(2) and c(10-14). The alpha and beta chains form an alternating ring which encloses part of the gamma chain. F(1) is attached to F(0) by a central stalk formed by the gamma and epsilon chains, while a peripheral stalk is formed by the delta and b chains.</text>
</comment>
<comment type="subcellular location">
    <subcellularLocation>
        <location evidence="1">Cell inner membrane</location>
        <topology evidence="1">Single-pass membrane protein</topology>
    </subcellularLocation>
</comment>
<comment type="similarity">
    <text evidence="1">Belongs to the ATPase B chain family.</text>
</comment>
<organism>
    <name type="scientific">Salmonella heidelberg (strain SL476)</name>
    <dbReference type="NCBI Taxonomy" id="454169"/>
    <lineage>
        <taxon>Bacteria</taxon>
        <taxon>Pseudomonadati</taxon>
        <taxon>Pseudomonadota</taxon>
        <taxon>Gammaproteobacteria</taxon>
        <taxon>Enterobacterales</taxon>
        <taxon>Enterobacteriaceae</taxon>
        <taxon>Salmonella</taxon>
    </lineage>
</organism>
<proteinExistence type="inferred from homology"/>
<reference key="1">
    <citation type="journal article" date="2011" name="J. Bacteriol.">
        <title>Comparative genomics of 28 Salmonella enterica isolates: evidence for CRISPR-mediated adaptive sublineage evolution.</title>
        <authorList>
            <person name="Fricke W.F."/>
            <person name="Mammel M.K."/>
            <person name="McDermott P.F."/>
            <person name="Tartera C."/>
            <person name="White D.G."/>
            <person name="Leclerc J.E."/>
            <person name="Ravel J."/>
            <person name="Cebula T.A."/>
        </authorList>
    </citation>
    <scope>NUCLEOTIDE SEQUENCE [LARGE SCALE GENOMIC DNA]</scope>
    <source>
        <strain>SL476</strain>
    </source>
</reference>
<accession>B4TAX6</accession>
<dbReference type="EMBL" id="CP001120">
    <property type="protein sequence ID" value="ACF69481.1"/>
    <property type="molecule type" value="Genomic_DNA"/>
</dbReference>
<dbReference type="RefSeq" id="WP_001052212.1">
    <property type="nucleotide sequence ID" value="NC_011083.1"/>
</dbReference>
<dbReference type="SMR" id="B4TAX6"/>
<dbReference type="GeneID" id="66758158"/>
<dbReference type="KEGG" id="seh:SeHA_C4200"/>
<dbReference type="HOGENOM" id="CLU_079215_4_5_6"/>
<dbReference type="Proteomes" id="UP000001866">
    <property type="component" value="Chromosome"/>
</dbReference>
<dbReference type="GO" id="GO:0005886">
    <property type="term" value="C:plasma membrane"/>
    <property type="evidence" value="ECO:0007669"/>
    <property type="project" value="UniProtKB-SubCell"/>
</dbReference>
<dbReference type="GO" id="GO:0045259">
    <property type="term" value="C:proton-transporting ATP synthase complex"/>
    <property type="evidence" value="ECO:0007669"/>
    <property type="project" value="UniProtKB-KW"/>
</dbReference>
<dbReference type="GO" id="GO:0046933">
    <property type="term" value="F:proton-transporting ATP synthase activity, rotational mechanism"/>
    <property type="evidence" value="ECO:0007669"/>
    <property type="project" value="UniProtKB-UniRule"/>
</dbReference>
<dbReference type="GO" id="GO:0046961">
    <property type="term" value="F:proton-transporting ATPase activity, rotational mechanism"/>
    <property type="evidence" value="ECO:0007669"/>
    <property type="project" value="TreeGrafter"/>
</dbReference>
<dbReference type="CDD" id="cd06503">
    <property type="entry name" value="ATP-synt_Fo_b"/>
    <property type="match status" value="1"/>
</dbReference>
<dbReference type="FunFam" id="1.20.5.620:FF:000001">
    <property type="entry name" value="ATP synthase subunit b"/>
    <property type="match status" value="1"/>
</dbReference>
<dbReference type="Gene3D" id="1.20.5.620">
    <property type="entry name" value="F1F0 ATP synthase subunit B, membrane domain"/>
    <property type="match status" value="1"/>
</dbReference>
<dbReference type="HAMAP" id="MF_01398">
    <property type="entry name" value="ATP_synth_b_bprime"/>
    <property type="match status" value="1"/>
</dbReference>
<dbReference type="InterPro" id="IPR028987">
    <property type="entry name" value="ATP_synth_B-like_membr_sf"/>
</dbReference>
<dbReference type="InterPro" id="IPR002146">
    <property type="entry name" value="ATP_synth_b/b'su_bac/chlpt"/>
</dbReference>
<dbReference type="InterPro" id="IPR005864">
    <property type="entry name" value="ATP_synth_F0_bsu_bac"/>
</dbReference>
<dbReference type="InterPro" id="IPR050059">
    <property type="entry name" value="ATP_synthase_B_chain"/>
</dbReference>
<dbReference type="NCBIfam" id="TIGR01144">
    <property type="entry name" value="ATP_synt_b"/>
    <property type="match status" value="1"/>
</dbReference>
<dbReference type="NCBIfam" id="NF004411">
    <property type="entry name" value="PRK05759.1-2"/>
    <property type="match status" value="1"/>
</dbReference>
<dbReference type="NCBIfam" id="NF004413">
    <property type="entry name" value="PRK05759.1-4"/>
    <property type="match status" value="1"/>
</dbReference>
<dbReference type="PANTHER" id="PTHR33445:SF1">
    <property type="entry name" value="ATP SYNTHASE SUBUNIT B"/>
    <property type="match status" value="1"/>
</dbReference>
<dbReference type="PANTHER" id="PTHR33445">
    <property type="entry name" value="ATP SYNTHASE SUBUNIT B', CHLOROPLASTIC"/>
    <property type="match status" value="1"/>
</dbReference>
<dbReference type="Pfam" id="PF00430">
    <property type="entry name" value="ATP-synt_B"/>
    <property type="match status" value="1"/>
</dbReference>
<dbReference type="SUPFAM" id="SSF81573">
    <property type="entry name" value="F1F0 ATP synthase subunit B, membrane domain"/>
    <property type="match status" value="1"/>
</dbReference>
<keyword id="KW-0066">ATP synthesis</keyword>
<keyword id="KW-0997">Cell inner membrane</keyword>
<keyword id="KW-1003">Cell membrane</keyword>
<keyword id="KW-0138">CF(0)</keyword>
<keyword id="KW-0375">Hydrogen ion transport</keyword>
<keyword id="KW-0406">Ion transport</keyword>
<keyword id="KW-0472">Membrane</keyword>
<keyword id="KW-0812">Transmembrane</keyword>
<keyword id="KW-1133">Transmembrane helix</keyword>
<keyword id="KW-0813">Transport</keyword>
<name>ATPF_SALHS</name>
<sequence>MNLNATILGQAIAFILFVWFCMKYVWPPLMAAIEKRQKEIADGLASAERAHKDLDLAKASATDQLKKAKAEAQVIIEQANKRRAQILDEAKTEAEQERTKIVAQAQAEIEAERKRAREELRKQVAILAVAGAEKIIERSVDEAANSDIVDKLVAEL</sequence>
<protein>
    <recommendedName>
        <fullName evidence="1">ATP synthase subunit b</fullName>
    </recommendedName>
    <alternativeName>
        <fullName evidence="1">ATP synthase F(0) sector subunit b</fullName>
    </alternativeName>
    <alternativeName>
        <fullName evidence="1">ATPase subunit I</fullName>
    </alternativeName>
    <alternativeName>
        <fullName evidence="1">F-type ATPase subunit b</fullName>
        <shortName evidence="1">F-ATPase subunit b</shortName>
    </alternativeName>
</protein>
<evidence type="ECO:0000255" key="1">
    <source>
        <dbReference type="HAMAP-Rule" id="MF_01398"/>
    </source>
</evidence>